<protein>
    <recommendedName>
        <fullName>Kazal-type serine protease inhibitor domain-containing protein 1</fullName>
    </recommendedName>
</protein>
<sequence length="304" mass="32945">MLPPPRPAAALALPVLLLLLVVLTPPPTGARPSPGPDYLRRGWMRLLAEGEGCAPCRPEECAAPRGCLAGRVRDACGCCWECANLEGQLCDLDPSAHFYGHCGEQLECRLDTGGDLSRGEVPEPLCACRSQSPLCGSDGHTYSQICRLQEAARARPDANLTVAHPGPCESGPQIVSHPYDTWNVTGQDVIFGCEVFAYPMASIEWRKDGLDIQLPGDDPHISVQFRGGPQRFEVTGWLQIQAVRPSDEGTYRCLGRNALGQVEAPASLTVLTPDQLNSTGIPQLRSLNLVPEEEAESEENDDYY</sequence>
<feature type="signal peptide" evidence="7">
    <location>
        <begin position="1"/>
        <end position="30"/>
    </location>
</feature>
<feature type="chain" id="PRO_0000015076" description="Kazal-type serine protease inhibitor domain-containing protein 1">
    <location>
        <begin position="31"/>
        <end position="304"/>
    </location>
</feature>
<feature type="domain" description="IGFBP N-terminal" evidence="4">
    <location>
        <begin position="49"/>
        <end position="129"/>
    </location>
</feature>
<feature type="domain" description="Kazal-like" evidence="5">
    <location>
        <begin position="120"/>
        <end position="170"/>
    </location>
</feature>
<feature type="domain" description="Ig-like C2-type">
    <location>
        <begin position="172"/>
        <end position="269"/>
    </location>
</feature>
<feature type="glycosylation site" description="N-linked (GlcNAc...) asparagine" evidence="2">
    <location>
        <position position="159"/>
    </location>
</feature>
<feature type="glycosylation site" description="N-linked (GlcNAc...) asparagine" evidence="2">
    <location>
        <position position="183"/>
    </location>
</feature>
<feature type="glycosylation site" description="N-linked (GlcNAc...) asparagine" evidence="2">
    <location>
        <position position="277"/>
    </location>
</feature>
<feature type="disulfide bond" evidence="4">
    <location>
        <begin position="53"/>
        <end position="76"/>
    </location>
</feature>
<feature type="disulfide bond" evidence="4">
    <location>
        <begin position="56"/>
        <end position="78"/>
    </location>
</feature>
<feature type="disulfide bond" evidence="4">
    <location>
        <begin position="61"/>
        <end position="79"/>
    </location>
</feature>
<feature type="disulfide bond" evidence="4">
    <location>
        <begin position="67"/>
        <end position="82"/>
    </location>
</feature>
<feature type="disulfide bond" evidence="4">
    <location>
        <begin position="90"/>
        <end position="108"/>
    </location>
</feature>
<feature type="disulfide bond" evidence="4">
    <location>
        <begin position="102"/>
        <end position="126"/>
    </location>
</feature>
<feature type="disulfide bond" evidence="5">
    <location>
        <begin position="135"/>
        <end position="168"/>
    </location>
</feature>
<feature type="disulfide bond" evidence="3">
    <location>
        <begin position="193"/>
        <end position="253"/>
    </location>
</feature>
<feature type="splice variant" id="VSP_014303" description="In isoform 2." evidence="9 10">
    <original>WNVTGQDVIFGCEVFAYPMASIEWRKDGLDIQLPGDDPHISVQFRGGPQRFEVTGWLQIQAVRPSDEGTYR</original>
    <variation>QRGPRLQTLGTEDTLTTLVGAGGMARAVACGEAPGEHLALQVLCLSGKRRHLWQVGSTGSSEGVPSGGSFW</variation>
    <location>
        <begin position="182"/>
        <end position="252"/>
    </location>
</feature>
<feature type="splice variant" id="VSP_014304" description="In isoform 2." evidence="9 10">
    <location>
        <begin position="253"/>
        <end position="304"/>
    </location>
</feature>
<feature type="sequence variant" id="VAR_022739" description="In dbSNP:rs11547671." evidence="6">
    <original>C</original>
    <variation>G</variation>
    <location>
        <position position="76"/>
    </location>
</feature>
<feature type="sequence variant" id="VAR_033628" description="In dbSNP:rs11190812.">
    <original>G</original>
    <variation>D</variation>
    <location>
        <position position="236"/>
    </location>
</feature>
<feature type="sequence variant" id="VAR_033629" description="In dbSNP:rs807037." evidence="8">
    <original>G</original>
    <variation>A</variation>
    <location>
        <position position="255"/>
    </location>
</feature>
<feature type="sequence variant" id="VAR_049977" description="In dbSNP:rs36116329.">
    <original>R</original>
    <variation>H</variation>
    <location>
        <position position="256"/>
    </location>
</feature>
<keyword id="KW-0025">Alternative splicing</keyword>
<keyword id="KW-0217">Developmental protein</keyword>
<keyword id="KW-0221">Differentiation</keyword>
<keyword id="KW-0903">Direct protein sequencing</keyword>
<keyword id="KW-1015">Disulfide bond</keyword>
<keyword id="KW-0272">Extracellular matrix</keyword>
<keyword id="KW-0325">Glycoprotein</keyword>
<keyword id="KW-0393">Immunoglobulin domain</keyword>
<keyword id="KW-0892">Osteogenesis</keyword>
<keyword id="KW-1267">Proteomics identification</keyword>
<keyword id="KW-1185">Reference proteome</keyword>
<keyword id="KW-0964">Secreted</keyword>
<keyword id="KW-0732">Signal</keyword>
<proteinExistence type="evidence at protein level"/>
<evidence type="ECO:0000250" key="1"/>
<evidence type="ECO:0000255" key="2"/>
<evidence type="ECO:0000255" key="3">
    <source>
        <dbReference type="PROSITE-ProRule" id="PRU00114"/>
    </source>
</evidence>
<evidence type="ECO:0000255" key="4">
    <source>
        <dbReference type="PROSITE-ProRule" id="PRU00653"/>
    </source>
</evidence>
<evidence type="ECO:0000255" key="5">
    <source>
        <dbReference type="PROSITE-ProRule" id="PRU00798"/>
    </source>
</evidence>
<evidence type="ECO:0000269" key="6">
    <source>
    </source>
</evidence>
<evidence type="ECO:0000269" key="7">
    <source>
    </source>
</evidence>
<evidence type="ECO:0000269" key="8">
    <source ref="6"/>
</evidence>
<evidence type="ECO:0000303" key="9">
    <source ref="1"/>
</evidence>
<evidence type="ECO:0000303" key="10">
    <source ref="2"/>
</evidence>
<accession>Q96I82</accession>
<accession>D3DR74</accession>
<accession>Q6ZMB1</accession>
<accession>Q9BQ73</accession>
<dbReference type="EMBL" id="AY014271">
    <property type="protein sequence ID" value="AAG50354.1"/>
    <property type="molecule type" value="mRNA"/>
</dbReference>
<dbReference type="EMBL" id="AF333487">
    <property type="protein sequence ID" value="AAG50291.1"/>
    <property type="molecule type" value="mRNA"/>
</dbReference>
<dbReference type="EMBL" id="AY359087">
    <property type="protein sequence ID" value="AAQ89445.1"/>
    <property type="molecule type" value="mRNA"/>
</dbReference>
<dbReference type="EMBL" id="AK172862">
    <property type="protein sequence ID" value="BAD18818.1"/>
    <property type="molecule type" value="mRNA"/>
</dbReference>
<dbReference type="EMBL" id="AL133215">
    <property type="status" value="NOT_ANNOTATED_CDS"/>
    <property type="molecule type" value="Genomic_DNA"/>
</dbReference>
<dbReference type="EMBL" id="CH471066">
    <property type="protein sequence ID" value="EAW49782.1"/>
    <property type="molecule type" value="Genomic_DNA"/>
</dbReference>
<dbReference type="EMBL" id="CH471066">
    <property type="protein sequence ID" value="EAW49783.1"/>
    <property type="molecule type" value="Genomic_DNA"/>
</dbReference>
<dbReference type="EMBL" id="CH471066">
    <property type="protein sequence ID" value="EAW49784.1"/>
    <property type="molecule type" value="Genomic_DNA"/>
</dbReference>
<dbReference type="EMBL" id="BC007758">
    <property type="protein sequence ID" value="AAH07758.1"/>
    <property type="molecule type" value="mRNA"/>
</dbReference>
<dbReference type="CCDS" id="CCDS7509.1">
    <molecule id="Q96I82-1"/>
</dbReference>
<dbReference type="RefSeq" id="NP_001306232.1">
    <property type="nucleotide sequence ID" value="NM_001319303.1"/>
</dbReference>
<dbReference type="RefSeq" id="NP_112191.2">
    <molecule id="Q96I82-1"/>
    <property type="nucleotide sequence ID" value="NM_030929.4"/>
</dbReference>
<dbReference type="RefSeq" id="XP_016872203.1">
    <property type="nucleotide sequence ID" value="XM_017016714.1"/>
</dbReference>
<dbReference type="RefSeq" id="XP_016872204.1">
    <molecule id="Q96I82-1"/>
    <property type="nucleotide sequence ID" value="XM_017016715.3"/>
</dbReference>
<dbReference type="RefSeq" id="XP_024303981.1">
    <molecule id="Q96I82-1"/>
    <property type="nucleotide sequence ID" value="XM_024448213.2"/>
</dbReference>
<dbReference type="RefSeq" id="XP_054222816.1">
    <molecule id="Q96I82-1"/>
    <property type="nucleotide sequence ID" value="XM_054366841.1"/>
</dbReference>
<dbReference type="RefSeq" id="XP_054222817.1">
    <molecule id="Q96I82-1"/>
    <property type="nucleotide sequence ID" value="XM_054366842.1"/>
</dbReference>
<dbReference type="BioGRID" id="123556">
    <property type="interactions" value="25"/>
</dbReference>
<dbReference type="FunCoup" id="Q96I82">
    <property type="interactions" value="56"/>
</dbReference>
<dbReference type="IntAct" id="Q96I82">
    <property type="interactions" value="11"/>
</dbReference>
<dbReference type="STRING" id="9606.ENSP00000359219"/>
<dbReference type="GlyCosmos" id="Q96I82">
    <property type="glycosylation" value="3 sites, No reported glycans"/>
</dbReference>
<dbReference type="GlyGen" id="Q96I82">
    <property type="glycosylation" value="3 sites"/>
</dbReference>
<dbReference type="BioMuta" id="KAZALD1"/>
<dbReference type="DMDM" id="68565605"/>
<dbReference type="MassIVE" id="Q96I82"/>
<dbReference type="PaxDb" id="9606-ENSP00000359219"/>
<dbReference type="PeptideAtlas" id="Q96I82"/>
<dbReference type="ProteomicsDB" id="76816">
    <molecule id="Q96I82-1"/>
</dbReference>
<dbReference type="ProteomicsDB" id="76817">
    <molecule id="Q96I82-2"/>
</dbReference>
<dbReference type="Antibodypedia" id="1720">
    <property type="antibodies" value="58 antibodies from 16 providers"/>
</dbReference>
<dbReference type="DNASU" id="81621"/>
<dbReference type="Ensembl" id="ENST00000370200.6">
    <molecule id="Q96I82-1"/>
    <property type="protein sequence ID" value="ENSP00000359219.6"/>
    <property type="gene ID" value="ENSG00000107821.15"/>
</dbReference>
<dbReference type="GeneID" id="81621"/>
<dbReference type="KEGG" id="hsa:81621"/>
<dbReference type="MANE-Select" id="ENST00000370200.6">
    <property type="protein sequence ID" value="ENSP00000359219.6"/>
    <property type="RefSeq nucleotide sequence ID" value="NM_030929.5"/>
    <property type="RefSeq protein sequence ID" value="NP_112191.2"/>
</dbReference>
<dbReference type="UCSC" id="uc001ksr.4">
    <molecule id="Q96I82-1"/>
    <property type="organism name" value="human"/>
</dbReference>
<dbReference type="AGR" id="HGNC:25460"/>
<dbReference type="CTD" id="81621"/>
<dbReference type="DisGeNET" id="81621"/>
<dbReference type="GeneCards" id="KAZALD1"/>
<dbReference type="HGNC" id="HGNC:25460">
    <property type="gene designation" value="KAZALD1"/>
</dbReference>
<dbReference type="HPA" id="ENSG00000107821">
    <property type="expression patterns" value="Tissue enhanced (lymphoid)"/>
</dbReference>
<dbReference type="MIM" id="609208">
    <property type="type" value="gene"/>
</dbReference>
<dbReference type="neXtProt" id="NX_Q96I82"/>
<dbReference type="OpenTargets" id="ENSG00000107821"/>
<dbReference type="PharmGKB" id="PA134953983"/>
<dbReference type="VEuPathDB" id="HostDB:ENSG00000107821"/>
<dbReference type="eggNOG" id="ENOG502QTYU">
    <property type="taxonomic scope" value="Eukaryota"/>
</dbReference>
<dbReference type="GeneTree" id="ENSGT00530000063555"/>
<dbReference type="HOGENOM" id="CLU_075590_1_0_1"/>
<dbReference type="InParanoid" id="Q96I82"/>
<dbReference type="OMA" id="TWNITGQ"/>
<dbReference type="OrthoDB" id="10029006at2759"/>
<dbReference type="PAN-GO" id="Q96I82">
    <property type="GO annotations" value="2 GO annotations based on evolutionary models"/>
</dbReference>
<dbReference type="PhylomeDB" id="Q96I82"/>
<dbReference type="TreeFam" id="TF331645"/>
<dbReference type="PathwayCommons" id="Q96I82"/>
<dbReference type="SignaLink" id="Q96I82"/>
<dbReference type="BioGRID-ORCS" id="81621">
    <property type="hits" value="22 hits in 1157 CRISPR screens"/>
</dbReference>
<dbReference type="ChiTaRS" id="KAZALD1">
    <property type="organism name" value="human"/>
</dbReference>
<dbReference type="GeneWiki" id="KAZALD1"/>
<dbReference type="GenomeRNAi" id="81621"/>
<dbReference type="Pharos" id="Q96I82">
    <property type="development level" value="Tbio"/>
</dbReference>
<dbReference type="PRO" id="PR:Q96I82"/>
<dbReference type="Proteomes" id="UP000005640">
    <property type="component" value="Chromosome 10"/>
</dbReference>
<dbReference type="RNAct" id="Q96I82">
    <property type="molecule type" value="protein"/>
</dbReference>
<dbReference type="Bgee" id="ENSG00000107821">
    <property type="expression patterns" value="Expressed in primordial germ cell in gonad and 115 other cell types or tissues"/>
</dbReference>
<dbReference type="GO" id="GO:0005615">
    <property type="term" value="C:extracellular space"/>
    <property type="evidence" value="ECO:0000318"/>
    <property type="project" value="GO_Central"/>
</dbReference>
<dbReference type="GO" id="GO:0005614">
    <property type="term" value="C:interstitial matrix"/>
    <property type="evidence" value="ECO:0000318"/>
    <property type="project" value="GO_Central"/>
</dbReference>
<dbReference type="GO" id="GO:0005520">
    <property type="term" value="F:insulin-like growth factor binding"/>
    <property type="evidence" value="ECO:0007669"/>
    <property type="project" value="InterPro"/>
</dbReference>
<dbReference type="GO" id="GO:0030154">
    <property type="term" value="P:cell differentiation"/>
    <property type="evidence" value="ECO:0007669"/>
    <property type="project" value="UniProtKB-KW"/>
</dbReference>
<dbReference type="GO" id="GO:0030198">
    <property type="term" value="P:extracellular matrix organization"/>
    <property type="evidence" value="ECO:0007669"/>
    <property type="project" value="Ensembl"/>
</dbReference>
<dbReference type="GO" id="GO:0001503">
    <property type="term" value="P:ossification"/>
    <property type="evidence" value="ECO:0007669"/>
    <property type="project" value="UniProtKB-KW"/>
</dbReference>
<dbReference type="GO" id="GO:0001558">
    <property type="term" value="P:regulation of cell growth"/>
    <property type="evidence" value="ECO:0007669"/>
    <property type="project" value="InterPro"/>
</dbReference>
<dbReference type="GO" id="GO:0009966">
    <property type="term" value="P:regulation of signal transduction"/>
    <property type="evidence" value="ECO:0000318"/>
    <property type="project" value="GO_Central"/>
</dbReference>
<dbReference type="CDD" id="cd00104">
    <property type="entry name" value="KAZAL_FS"/>
    <property type="match status" value="1"/>
</dbReference>
<dbReference type="FunFam" id="2.60.40.10:FF:000032">
    <property type="entry name" value="palladin isoform X1"/>
    <property type="match status" value="1"/>
</dbReference>
<dbReference type="Gene3D" id="3.30.60.30">
    <property type="match status" value="1"/>
</dbReference>
<dbReference type="Gene3D" id="4.10.40.20">
    <property type="match status" value="1"/>
</dbReference>
<dbReference type="Gene3D" id="2.60.40.10">
    <property type="entry name" value="Immunoglobulins"/>
    <property type="match status" value="1"/>
</dbReference>
<dbReference type="InterPro" id="IPR009030">
    <property type="entry name" value="Growth_fac_rcpt_cys_sf"/>
</dbReference>
<dbReference type="InterPro" id="IPR007110">
    <property type="entry name" value="Ig-like_dom"/>
</dbReference>
<dbReference type="InterPro" id="IPR036179">
    <property type="entry name" value="Ig-like_dom_sf"/>
</dbReference>
<dbReference type="InterPro" id="IPR013783">
    <property type="entry name" value="Ig-like_fold"/>
</dbReference>
<dbReference type="InterPro" id="IPR013098">
    <property type="entry name" value="Ig_I-set"/>
</dbReference>
<dbReference type="InterPro" id="IPR003599">
    <property type="entry name" value="Ig_sub"/>
</dbReference>
<dbReference type="InterPro" id="IPR003598">
    <property type="entry name" value="Ig_sub2"/>
</dbReference>
<dbReference type="InterPro" id="IPR000867">
    <property type="entry name" value="IGFBP-like"/>
</dbReference>
<dbReference type="InterPro" id="IPR011390">
    <property type="entry name" value="IGFBP_rP_mac25"/>
</dbReference>
<dbReference type="InterPro" id="IPR002350">
    <property type="entry name" value="Kazal_dom"/>
</dbReference>
<dbReference type="InterPro" id="IPR036058">
    <property type="entry name" value="Kazal_dom_sf"/>
</dbReference>
<dbReference type="PANTHER" id="PTHR14186">
    <property type="entry name" value="INSULIN-LIKE GROWTH FACTOR BINDING PROTEIN-RELATED"/>
    <property type="match status" value="1"/>
</dbReference>
<dbReference type="PANTHER" id="PTHR14186:SF21">
    <property type="entry name" value="KAZAL-TYPE SERINE PROTEASE INHIBITOR DOMAIN-CONTAINING PROTEIN 1"/>
    <property type="match status" value="1"/>
</dbReference>
<dbReference type="Pfam" id="PF07679">
    <property type="entry name" value="I-set"/>
    <property type="match status" value="1"/>
</dbReference>
<dbReference type="Pfam" id="PF00219">
    <property type="entry name" value="IGFBP"/>
    <property type="match status" value="1"/>
</dbReference>
<dbReference type="Pfam" id="PF07648">
    <property type="entry name" value="Kazal_2"/>
    <property type="match status" value="1"/>
</dbReference>
<dbReference type="PIRSF" id="PIRSF018239">
    <property type="entry name" value="IGFBP_rP_mac25"/>
    <property type="match status" value="1"/>
</dbReference>
<dbReference type="SMART" id="SM00409">
    <property type="entry name" value="IG"/>
    <property type="match status" value="1"/>
</dbReference>
<dbReference type="SMART" id="SM00408">
    <property type="entry name" value="IGc2"/>
    <property type="match status" value="1"/>
</dbReference>
<dbReference type="SMART" id="SM00280">
    <property type="entry name" value="KAZAL"/>
    <property type="match status" value="1"/>
</dbReference>
<dbReference type="SUPFAM" id="SSF57184">
    <property type="entry name" value="Growth factor receptor domain"/>
    <property type="match status" value="1"/>
</dbReference>
<dbReference type="SUPFAM" id="SSF48726">
    <property type="entry name" value="Immunoglobulin"/>
    <property type="match status" value="1"/>
</dbReference>
<dbReference type="SUPFAM" id="SSF100895">
    <property type="entry name" value="Kazal-type serine protease inhibitors"/>
    <property type="match status" value="1"/>
</dbReference>
<dbReference type="PROSITE" id="PS50835">
    <property type="entry name" value="IG_LIKE"/>
    <property type="match status" value="1"/>
</dbReference>
<dbReference type="PROSITE" id="PS51323">
    <property type="entry name" value="IGFBP_N_2"/>
    <property type="match status" value="1"/>
</dbReference>
<dbReference type="PROSITE" id="PS51465">
    <property type="entry name" value="KAZAL_2"/>
    <property type="match status" value="1"/>
</dbReference>
<comment type="function">
    <text evidence="1">Involved in the proliferation of osteoblasts during bone formation and bone regeneration. Promotes matrix assembly (By similarity).</text>
</comment>
<comment type="interaction">
    <interactant intactId="EBI-25904181">
        <id>Q96I82</id>
    </interactant>
    <interactant intactId="EBI-10988864">
        <id>P46379-2</id>
        <label>BAG6</label>
    </interactant>
    <organismsDiffer>false</organismsDiffer>
    <experiments>3</experiments>
</comment>
<comment type="interaction">
    <interactant intactId="EBI-25904181">
        <id>Q96I82</id>
    </interactant>
    <interactant intactId="EBI-948266">
        <id>O14901</id>
        <label>KLF11</label>
    </interactant>
    <organismsDiffer>false</organismsDiffer>
    <experiments>3</experiments>
</comment>
<comment type="subcellular location">
    <subcellularLocation>
        <location evidence="1">Secreted</location>
        <location evidence="1">Extracellular space</location>
        <location evidence="1">Extracellular matrix</location>
    </subcellularLocation>
</comment>
<comment type="alternative products">
    <event type="alternative splicing"/>
    <isoform>
        <id>Q96I82-1</id>
        <name>1</name>
        <sequence type="displayed"/>
    </isoform>
    <isoform>
        <id>Q96I82-2</id>
        <name>2</name>
        <sequence type="described" ref="VSP_014303 VSP_014304"/>
    </isoform>
</comment>
<gene>
    <name type="primary">KAZALD1</name>
    <name type="ORF">FKSG28</name>
    <name type="ORF">FKSG40</name>
    <name type="ORF">UNQ2945/PRO21184</name>
</gene>
<name>KAZD1_HUMAN</name>
<reference key="1">
    <citation type="submission" date="2000-11" db="EMBL/GenBank/DDBJ databases">
        <title>Cloning of FKSG28, a novel gene located on human chromosome 10.</title>
        <authorList>
            <person name="Wang Y.-G."/>
            <person name="Gong L."/>
        </authorList>
    </citation>
    <scope>NUCLEOTIDE SEQUENCE [MRNA] (ISOFORM 2)</scope>
</reference>
<reference key="2">
    <citation type="submission" date="2001-01" db="EMBL/GenBank/DDBJ databases">
        <title>Identification of FKSG40, a novel gene located on human chromosome 10.</title>
        <authorList>
            <person name="Wang Y.-G."/>
            <person name="Gong L."/>
        </authorList>
    </citation>
    <scope>NUCLEOTIDE SEQUENCE [MRNA] (ISOFORM 2)</scope>
</reference>
<reference key="3">
    <citation type="journal article" date="2003" name="Genome Res.">
        <title>The secreted protein discovery initiative (SPDI), a large-scale effort to identify novel human secreted and transmembrane proteins: a bioinformatics assessment.</title>
        <authorList>
            <person name="Clark H.F."/>
            <person name="Gurney A.L."/>
            <person name="Abaya E."/>
            <person name="Baker K."/>
            <person name="Baldwin D.T."/>
            <person name="Brush J."/>
            <person name="Chen J."/>
            <person name="Chow B."/>
            <person name="Chui C."/>
            <person name="Crowley C."/>
            <person name="Currell B."/>
            <person name="Deuel B."/>
            <person name="Dowd P."/>
            <person name="Eaton D."/>
            <person name="Foster J.S."/>
            <person name="Grimaldi C."/>
            <person name="Gu Q."/>
            <person name="Hass P.E."/>
            <person name="Heldens S."/>
            <person name="Huang A."/>
            <person name="Kim H.S."/>
            <person name="Klimowski L."/>
            <person name="Jin Y."/>
            <person name="Johnson S."/>
            <person name="Lee J."/>
            <person name="Lewis L."/>
            <person name="Liao D."/>
            <person name="Mark M.R."/>
            <person name="Robbie E."/>
            <person name="Sanchez C."/>
            <person name="Schoenfeld J."/>
            <person name="Seshagiri S."/>
            <person name="Simmons L."/>
            <person name="Singh J."/>
            <person name="Smith V."/>
            <person name="Stinson J."/>
            <person name="Vagts A."/>
            <person name="Vandlen R.L."/>
            <person name="Watanabe C."/>
            <person name="Wieand D."/>
            <person name="Woods K."/>
            <person name="Xie M.-H."/>
            <person name="Yansura D.G."/>
            <person name="Yi S."/>
            <person name="Yu G."/>
            <person name="Yuan J."/>
            <person name="Zhang M."/>
            <person name="Zhang Z."/>
            <person name="Goddard A.D."/>
            <person name="Wood W.I."/>
            <person name="Godowski P.J."/>
            <person name="Gray A.M."/>
        </authorList>
    </citation>
    <scope>NUCLEOTIDE SEQUENCE [LARGE SCALE MRNA] (ISOFORM 1)</scope>
</reference>
<reference key="4">
    <citation type="journal article" date="2004" name="Nat. Genet.">
        <title>Complete sequencing and characterization of 21,243 full-length human cDNAs.</title>
        <authorList>
            <person name="Ota T."/>
            <person name="Suzuki Y."/>
            <person name="Nishikawa T."/>
            <person name="Otsuki T."/>
            <person name="Sugiyama T."/>
            <person name="Irie R."/>
            <person name="Wakamatsu A."/>
            <person name="Hayashi K."/>
            <person name="Sato H."/>
            <person name="Nagai K."/>
            <person name="Kimura K."/>
            <person name="Makita H."/>
            <person name="Sekine M."/>
            <person name="Obayashi M."/>
            <person name="Nishi T."/>
            <person name="Shibahara T."/>
            <person name="Tanaka T."/>
            <person name="Ishii S."/>
            <person name="Yamamoto J."/>
            <person name="Saito K."/>
            <person name="Kawai Y."/>
            <person name="Isono Y."/>
            <person name="Nakamura Y."/>
            <person name="Nagahari K."/>
            <person name="Murakami K."/>
            <person name="Yasuda T."/>
            <person name="Iwayanagi T."/>
            <person name="Wagatsuma M."/>
            <person name="Shiratori A."/>
            <person name="Sudo H."/>
            <person name="Hosoiri T."/>
            <person name="Kaku Y."/>
            <person name="Kodaira H."/>
            <person name="Kondo H."/>
            <person name="Sugawara M."/>
            <person name="Takahashi M."/>
            <person name="Kanda K."/>
            <person name="Yokoi T."/>
            <person name="Furuya T."/>
            <person name="Kikkawa E."/>
            <person name="Omura Y."/>
            <person name="Abe K."/>
            <person name="Kamihara K."/>
            <person name="Katsuta N."/>
            <person name="Sato K."/>
            <person name="Tanikawa M."/>
            <person name="Yamazaki M."/>
            <person name="Ninomiya K."/>
            <person name="Ishibashi T."/>
            <person name="Yamashita H."/>
            <person name="Murakawa K."/>
            <person name="Fujimori K."/>
            <person name="Tanai H."/>
            <person name="Kimata M."/>
            <person name="Watanabe M."/>
            <person name="Hiraoka S."/>
            <person name="Chiba Y."/>
            <person name="Ishida S."/>
            <person name="Ono Y."/>
            <person name="Takiguchi S."/>
            <person name="Watanabe S."/>
            <person name="Yosida M."/>
            <person name="Hotuta T."/>
            <person name="Kusano J."/>
            <person name="Kanehori K."/>
            <person name="Takahashi-Fujii A."/>
            <person name="Hara H."/>
            <person name="Tanase T.-O."/>
            <person name="Nomura Y."/>
            <person name="Togiya S."/>
            <person name="Komai F."/>
            <person name="Hara R."/>
            <person name="Takeuchi K."/>
            <person name="Arita M."/>
            <person name="Imose N."/>
            <person name="Musashino K."/>
            <person name="Yuuki H."/>
            <person name="Oshima A."/>
            <person name="Sasaki N."/>
            <person name="Aotsuka S."/>
            <person name="Yoshikawa Y."/>
            <person name="Matsunawa H."/>
            <person name="Ichihara T."/>
            <person name="Shiohata N."/>
            <person name="Sano S."/>
            <person name="Moriya S."/>
            <person name="Momiyama H."/>
            <person name="Satoh N."/>
            <person name="Takami S."/>
            <person name="Terashima Y."/>
            <person name="Suzuki O."/>
            <person name="Nakagawa S."/>
            <person name="Senoh A."/>
            <person name="Mizoguchi H."/>
            <person name="Goto Y."/>
            <person name="Shimizu F."/>
            <person name="Wakebe H."/>
            <person name="Hishigaki H."/>
            <person name="Watanabe T."/>
            <person name="Sugiyama A."/>
            <person name="Takemoto M."/>
            <person name="Kawakami B."/>
            <person name="Yamazaki M."/>
            <person name="Watanabe K."/>
            <person name="Kumagai A."/>
            <person name="Itakura S."/>
            <person name="Fukuzumi Y."/>
            <person name="Fujimori Y."/>
            <person name="Komiyama M."/>
            <person name="Tashiro H."/>
            <person name="Tanigami A."/>
            <person name="Fujiwara T."/>
            <person name="Ono T."/>
            <person name="Yamada K."/>
            <person name="Fujii Y."/>
            <person name="Ozaki K."/>
            <person name="Hirao M."/>
            <person name="Ohmori Y."/>
            <person name="Kawabata A."/>
            <person name="Hikiji T."/>
            <person name="Kobatake N."/>
            <person name="Inagaki H."/>
            <person name="Ikema Y."/>
            <person name="Okamoto S."/>
            <person name="Okitani R."/>
            <person name="Kawakami T."/>
            <person name="Noguchi S."/>
            <person name="Itoh T."/>
            <person name="Shigeta K."/>
            <person name="Senba T."/>
            <person name="Matsumura K."/>
            <person name="Nakajima Y."/>
            <person name="Mizuno T."/>
            <person name="Morinaga M."/>
            <person name="Sasaki M."/>
            <person name="Togashi T."/>
            <person name="Oyama M."/>
            <person name="Hata H."/>
            <person name="Watanabe M."/>
            <person name="Komatsu T."/>
            <person name="Mizushima-Sugano J."/>
            <person name="Satoh T."/>
            <person name="Shirai Y."/>
            <person name="Takahashi Y."/>
            <person name="Nakagawa K."/>
            <person name="Okumura K."/>
            <person name="Nagase T."/>
            <person name="Nomura N."/>
            <person name="Kikuchi H."/>
            <person name="Masuho Y."/>
            <person name="Yamashita R."/>
            <person name="Nakai K."/>
            <person name="Yada T."/>
            <person name="Nakamura Y."/>
            <person name="Ohara O."/>
            <person name="Isogai T."/>
            <person name="Sugano S."/>
        </authorList>
    </citation>
    <scope>NUCLEOTIDE SEQUENCE [LARGE SCALE MRNA] (ISOFORM 1)</scope>
    <scope>VARIANT GLY-76</scope>
    <source>
        <tissue>Small intestine</tissue>
    </source>
</reference>
<reference key="5">
    <citation type="journal article" date="2004" name="Nature">
        <title>The DNA sequence and comparative analysis of human chromosome 10.</title>
        <authorList>
            <person name="Deloukas P."/>
            <person name="Earthrowl M.E."/>
            <person name="Grafham D.V."/>
            <person name="Rubenfield M."/>
            <person name="French L."/>
            <person name="Steward C.A."/>
            <person name="Sims S.K."/>
            <person name="Jones M.C."/>
            <person name="Searle S."/>
            <person name="Scott C."/>
            <person name="Howe K."/>
            <person name="Hunt S.E."/>
            <person name="Andrews T.D."/>
            <person name="Gilbert J.G.R."/>
            <person name="Swarbreck D."/>
            <person name="Ashurst J.L."/>
            <person name="Taylor A."/>
            <person name="Battles J."/>
            <person name="Bird C.P."/>
            <person name="Ainscough R."/>
            <person name="Almeida J.P."/>
            <person name="Ashwell R.I.S."/>
            <person name="Ambrose K.D."/>
            <person name="Babbage A.K."/>
            <person name="Bagguley C.L."/>
            <person name="Bailey J."/>
            <person name="Banerjee R."/>
            <person name="Bates K."/>
            <person name="Beasley H."/>
            <person name="Bray-Allen S."/>
            <person name="Brown A.J."/>
            <person name="Brown J.Y."/>
            <person name="Burford D.C."/>
            <person name="Burrill W."/>
            <person name="Burton J."/>
            <person name="Cahill P."/>
            <person name="Camire D."/>
            <person name="Carter N.P."/>
            <person name="Chapman J.C."/>
            <person name="Clark S.Y."/>
            <person name="Clarke G."/>
            <person name="Clee C.M."/>
            <person name="Clegg S."/>
            <person name="Corby N."/>
            <person name="Coulson A."/>
            <person name="Dhami P."/>
            <person name="Dutta I."/>
            <person name="Dunn M."/>
            <person name="Faulkner L."/>
            <person name="Frankish A."/>
            <person name="Frankland J.A."/>
            <person name="Garner P."/>
            <person name="Garnett J."/>
            <person name="Gribble S."/>
            <person name="Griffiths C."/>
            <person name="Grocock R."/>
            <person name="Gustafson E."/>
            <person name="Hammond S."/>
            <person name="Harley J.L."/>
            <person name="Hart E."/>
            <person name="Heath P.D."/>
            <person name="Ho T.P."/>
            <person name="Hopkins B."/>
            <person name="Horne J."/>
            <person name="Howden P.J."/>
            <person name="Huckle E."/>
            <person name="Hynds C."/>
            <person name="Johnson C."/>
            <person name="Johnson D."/>
            <person name="Kana A."/>
            <person name="Kay M."/>
            <person name="Kimberley A.M."/>
            <person name="Kershaw J.K."/>
            <person name="Kokkinaki M."/>
            <person name="Laird G.K."/>
            <person name="Lawlor S."/>
            <person name="Lee H.M."/>
            <person name="Leongamornlert D.A."/>
            <person name="Laird G."/>
            <person name="Lloyd C."/>
            <person name="Lloyd D.M."/>
            <person name="Loveland J."/>
            <person name="Lovell J."/>
            <person name="McLaren S."/>
            <person name="McLay K.E."/>
            <person name="McMurray A."/>
            <person name="Mashreghi-Mohammadi M."/>
            <person name="Matthews L."/>
            <person name="Milne S."/>
            <person name="Nickerson T."/>
            <person name="Nguyen M."/>
            <person name="Overton-Larty E."/>
            <person name="Palmer S.A."/>
            <person name="Pearce A.V."/>
            <person name="Peck A.I."/>
            <person name="Pelan S."/>
            <person name="Phillimore B."/>
            <person name="Porter K."/>
            <person name="Rice C.M."/>
            <person name="Rogosin A."/>
            <person name="Ross M.T."/>
            <person name="Sarafidou T."/>
            <person name="Sehra H.K."/>
            <person name="Shownkeen R."/>
            <person name="Skuce C.D."/>
            <person name="Smith M."/>
            <person name="Standring L."/>
            <person name="Sycamore N."/>
            <person name="Tester J."/>
            <person name="Thorpe A."/>
            <person name="Torcasso W."/>
            <person name="Tracey A."/>
            <person name="Tromans A."/>
            <person name="Tsolas J."/>
            <person name="Wall M."/>
            <person name="Walsh J."/>
            <person name="Wang H."/>
            <person name="Weinstock K."/>
            <person name="West A.P."/>
            <person name="Willey D.L."/>
            <person name="Whitehead S.L."/>
            <person name="Wilming L."/>
            <person name="Wray P.W."/>
            <person name="Young L."/>
            <person name="Chen Y."/>
            <person name="Lovering R.C."/>
            <person name="Moschonas N.K."/>
            <person name="Siebert R."/>
            <person name="Fechtel K."/>
            <person name="Bentley D."/>
            <person name="Durbin R.M."/>
            <person name="Hubbard T."/>
            <person name="Doucette-Stamm L."/>
            <person name="Beck S."/>
            <person name="Smith D.R."/>
            <person name="Rogers J."/>
        </authorList>
    </citation>
    <scope>NUCLEOTIDE SEQUENCE [LARGE SCALE GENOMIC DNA]</scope>
</reference>
<reference key="6">
    <citation type="submission" date="2005-09" db="EMBL/GenBank/DDBJ databases">
        <authorList>
            <person name="Mural R.J."/>
            <person name="Istrail S."/>
            <person name="Sutton G.G."/>
            <person name="Florea L."/>
            <person name="Halpern A.L."/>
            <person name="Mobarry C.M."/>
            <person name="Lippert R."/>
            <person name="Walenz B."/>
            <person name="Shatkay H."/>
            <person name="Dew I."/>
            <person name="Miller J.R."/>
            <person name="Flanigan M.J."/>
            <person name="Edwards N.J."/>
            <person name="Bolanos R."/>
            <person name="Fasulo D."/>
            <person name="Halldorsson B.V."/>
            <person name="Hannenhalli S."/>
            <person name="Turner R."/>
            <person name="Yooseph S."/>
            <person name="Lu F."/>
            <person name="Nusskern D.R."/>
            <person name="Shue B.C."/>
            <person name="Zheng X.H."/>
            <person name="Zhong F."/>
            <person name="Delcher A.L."/>
            <person name="Huson D.H."/>
            <person name="Kravitz S.A."/>
            <person name="Mouchard L."/>
            <person name="Reinert K."/>
            <person name="Remington K.A."/>
            <person name="Clark A.G."/>
            <person name="Waterman M.S."/>
            <person name="Eichler E.E."/>
            <person name="Adams M.D."/>
            <person name="Hunkapiller M.W."/>
            <person name="Myers E.W."/>
            <person name="Venter J.C."/>
        </authorList>
    </citation>
    <scope>NUCLEOTIDE SEQUENCE [LARGE SCALE GENOMIC DNA]</scope>
    <scope>VARIANT ALA-255</scope>
</reference>
<reference key="7">
    <citation type="journal article" date="2004" name="Genome Res.">
        <title>The status, quality, and expansion of the NIH full-length cDNA project: the Mammalian Gene Collection (MGC).</title>
        <authorList>
            <consortium name="The MGC Project Team"/>
        </authorList>
    </citation>
    <scope>NUCLEOTIDE SEQUENCE [LARGE SCALE MRNA] (ISOFORM 1)</scope>
    <source>
        <tissue>Muscle</tissue>
    </source>
</reference>
<reference key="8">
    <citation type="journal article" date="2004" name="Protein Sci.">
        <title>Signal peptide prediction based on analysis of experimentally verified cleavage sites.</title>
        <authorList>
            <person name="Zhang Z."/>
            <person name="Henzel W.J."/>
        </authorList>
    </citation>
    <scope>PROTEIN SEQUENCE OF 31-45</scope>
</reference>
<organism>
    <name type="scientific">Homo sapiens</name>
    <name type="common">Human</name>
    <dbReference type="NCBI Taxonomy" id="9606"/>
    <lineage>
        <taxon>Eukaryota</taxon>
        <taxon>Metazoa</taxon>
        <taxon>Chordata</taxon>
        <taxon>Craniata</taxon>
        <taxon>Vertebrata</taxon>
        <taxon>Euteleostomi</taxon>
        <taxon>Mammalia</taxon>
        <taxon>Eutheria</taxon>
        <taxon>Euarchontoglires</taxon>
        <taxon>Primates</taxon>
        <taxon>Haplorrhini</taxon>
        <taxon>Catarrhini</taxon>
        <taxon>Hominidae</taxon>
        <taxon>Homo</taxon>
    </lineage>
</organism>